<accession>O43516</accession>
<accession>B8ZZM1</accession>
<accession>D3DPE4</accession>
<accession>Q15220</accession>
<accession>Q53TA9</accession>
<accession>Q6MZU9</accession>
<accession>Q9BU37</accession>
<accession>Q9UNP1</accession>
<gene>
    <name type="primary">WIPF1</name>
    <name type="synonym">WASPIP</name>
    <name type="synonym">WIP</name>
</gene>
<organism>
    <name type="scientific">Homo sapiens</name>
    <name type="common">Human</name>
    <dbReference type="NCBI Taxonomy" id="9606"/>
    <lineage>
        <taxon>Eukaryota</taxon>
        <taxon>Metazoa</taxon>
        <taxon>Chordata</taxon>
        <taxon>Craniata</taxon>
        <taxon>Vertebrata</taxon>
        <taxon>Euteleostomi</taxon>
        <taxon>Mammalia</taxon>
        <taxon>Eutheria</taxon>
        <taxon>Euarchontoglires</taxon>
        <taxon>Primates</taxon>
        <taxon>Haplorrhini</taxon>
        <taxon>Catarrhini</taxon>
        <taxon>Hominidae</taxon>
        <taxon>Homo</taxon>
    </lineage>
</organism>
<keyword id="KW-0002">3D-structure</keyword>
<keyword id="KW-0009">Actin-binding</keyword>
<keyword id="KW-0025">Alternative splicing</keyword>
<keyword id="KW-0966">Cell projection</keyword>
<keyword id="KW-0963">Cytoplasm</keyword>
<keyword id="KW-0968">Cytoplasmic vesicle</keyword>
<keyword id="KW-0206">Cytoskeleton</keyword>
<keyword id="KW-0488">Methylation</keyword>
<keyword id="KW-0597">Phosphoprotein</keyword>
<keyword id="KW-1267">Proteomics identification</keyword>
<keyword id="KW-1185">Reference proteome</keyword>
<keyword id="KW-0677">Repeat</keyword>
<protein>
    <recommendedName>
        <fullName>WAS/WASL-interacting protein family member 1</fullName>
    </recommendedName>
    <alternativeName>
        <fullName>Protein PRPL-2</fullName>
    </alternativeName>
    <alternativeName>
        <fullName>Wiskott-Aldrich syndrome protein-interacting protein</fullName>
        <shortName>WASP-interacting protein</shortName>
    </alternativeName>
</protein>
<name>WIPF1_HUMAN</name>
<feature type="chain" id="PRO_0000065941" description="WAS/WASL-interacting protein family member 1">
    <location>
        <begin position="1"/>
        <end position="503"/>
    </location>
</feature>
<feature type="domain" description="WH2" evidence="3">
    <location>
        <begin position="32"/>
        <end position="49"/>
    </location>
</feature>
<feature type="repeat" description="XRSGPXPPXP motif 1">
    <location>
        <begin position="352"/>
        <end position="361"/>
    </location>
</feature>
<feature type="repeat" description="XRSGPXPPXP motif 2">
    <location>
        <begin position="374"/>
        <end position="383"/>
    </location>
</feature>
<feature type="repeat" description="XRSGPXPPXP motif 3">
    <location>
        <begin position="410"/>
        <end position="419"/>
    </location>
</feature>
<feature type="region of interest" description="Disordered" evidence="4">
    <location>
        <begin position="1"/>
        <end position="503"/>
    </location>
</feature>
<feature type="region of interest" description="Binds actin">
    <location>
        <begin position="45"/>
        <end position="48"/>
    </location>
</feature>
<feature type="compositionally biased region" description="Pro residues" evidence="4">
    <location>
        <begin position="1"/>
        <end position="14"/>
    </location>
</feature>
<feature type="compositionally biased region" description="Polar residues" evidence="4">
    <location>
        <begin position="21"/>
        <end position="31"/>
    </location>
</feature>
<feature type="compositionally biased region" description="Gly residues" evidence="4">
    <location>
        <begin position="65"/>
        <end position="104"/>
    </location>
</feature>
<feature type="compositionally biased region" description="Low complexity" evidence="4">
    <location>
        <begin position="121"/>
        <end position="137"/>
    </location>
</feature>
<feature type="compositionally biased region" description="Pro residues" evidence="4">
    <location>
        <begin position="141"/>
        <end position="154"/>
    </location>
</feature>
<feature type="compositionally biased region" description="Pro residues" evidence="4">
    <location>
        <begin position="161"/>
        <end position="174"/>
    </location>
</feature>
<feature type="compositionally biased region" description="Pro residues" evidence="4">
    <location>
        <begin position="182"/>
        <end position="191"/>
    </location>
</feature>
<feature type="compositionally biased region" description="Pro residues" evidence="4">
    <location>
        <begin position="204"/>
        <end position="223"/>
    </location>
</feature>
<feature type="compositionally biased region" description="Low complexity" evidence="4">
    <location>
        <begin position="238"/>
        <end position="247"/>
    </location>
</feature>
<feature type="compositionally biased region" description="Pro residues" evidence="4">
    <location>
        <begin position="282"/>
        <end position="298"/>
    </location>
</feature>
<feature type="compositionally biased region" description="Pro residues" evidence="4">
    <location>
        <begin position="306"/>
        <end position="323"/>
    </location>
</feature>
<feature type="compositionally biased region" description="Pro residues" evidence="4">
    <location>
        <begin position="346"/>
        <end position="371"/>
    </location>
</feature>
<feature type="compositionally biased region" description="Pro residues" evidence="4">
    <location>
        <begin position="413"/>
        <end position="434"/>
    </location>
</feature>
<feature type="compositionally biased region" description="Basic and acidic residues" evidence="4">
    <location>
        <begin position="480"/>
        <end position="494"/>
    </location>
</feature>
<feature type="modified residue" description="Asymmetric dimethylarginine" evidence="2">
    <location>
        <position position="33"/>
    </location>
</feature>
<feature type="modified residue" description="Omega-N-methylarginine" evidence="2">
    <location>
        <position position="125"/>
    </location>
</feature>
<feature type="modified residue" description="Omega-N-methylarginine" evidence="2">
    <location>
        <position position="134"/>
    </location>
</feature>
<feature type="modified residue" description="Phosphoserine" evidence="2">
    <location>
        <position position="142"/>
    </location>
</feature>
<feature type="modified residue" description="Phosphoserine" evidence="23">
    <location>
        <position position="234"/>
    </location>
</feature>
<feature type="modified residue" description="Phosphoserine" evidence="22 23 24">
    <location>
        <position position="340"/>
    </location>
</feature>
<feature type="modified residue" description="Phosphothreonine" evidence="20 22">
    <location>
        <position position="345"/>
    </location>
</feature>
<feature type="modified residue" description="Phosphoserine" evidence="20 21 22 23">
    <location>
        <position position="350"/>
    </location>
</feature>
<feature type="splice variant" id="VSP_012964" description="In isoform 4." evidence="16">
    <location>
        <begin position="220"/>
        <end position="364"/>
    </location>
</feature>
<feature type="splice variant" id="VSP_012965" description="In isoform 2." evidence="18">
    <original>GSNRRERGAPPLPPIPR</original>
    <variation>EYFCQGF</variation>
    <location>
        <begin position="487"/>
        <end position="503"/>
    </location>
</feature>
<feature type="splice variant" id="VSP_012966" description="In isoform 3." evidence="17">
    <original>R</original>
    <variation>RPPKQAAE</variation>
    <location>
        <position position="503"/>
    </location>
</feature>
<feature type="sequence variant" id="VAR_046526" description="In dbSNP:rs4972450." evidence="5 7 9 13 14 15">
    <original>P</original>
    <variation>L</variation>
    <location>
        <position position="198"/>
    </location>
</feature>
<feature type="sequence variant" id="VAR_010295" evidence="13 14">
    <original>A</original>
    <variation>G</variation>
    <location>
        <position position="495"/>
    </location>
</feature>
<feature type="sequence conflict" description="In Ref. 3; CAE45928." evidence="19" ref="3">
    <original>N</original>
    <variation>D</variation>
    <location>
        <position position="119"/>
    </location>
</feature>
<feature type="sequence conflict" description="In Ref. 6; AAH02914." evidence="19" ref="6">
    <original>D</original>
    <variation>H</variation>
    <location>
        <position position="120"/>
    </location>
</feature>
<feature type="sequence conflict" description="In Ref. 2; CAA60014." evidence="19" ref="2">
    <original>P</original>
    <variation>PV</variation>
    <location>
        <position position="360"/>
    </location>
</feature>
<feature type="helix" evidence="25">
    <location>
        <begin position="33"/>
        <end position="42"/>
    </location>
</feature>
<comment type="function">
    <text evidence="1 6 11 13">Plays a role in the reorganization of the actin cytoskeleton. Contributes with NCK1 and GRB2 in the recruitment and activation of WASL. May participate in regulating the subcellular localization of WASL, resulting in the disassembly of stress fibers in favor of filopodia formation. Plays a role in the formation of cell ruffles (By similarity). Plays an important role in the intracellular motility of vaccinia virus by functioning as an adapter for recruiting WASL to vaccinia virus.</text>
</comment>
<comment type="subunit">
    <text evidence="1 5 8 10 11 13">Binds to WAS, profilin and actin. Binds to WASL (By similarity). Interacts with DBNL. Interacts with FNBP1L (via the SH3 domain) (PubMed:19798448).</text>
</comment>
<comment type="interaction">
    <interactant intactId="EBI-346356">
        <id>O43516</id>
    </interactant>
    <interactant intactId="EBI-743598">
        <id>Q9NYB9</id>
        <label>ABI2</label>
    </interactant>
    <organismsDiffer>false</organismsDiffer>
    <experiments>4</experiments>
</comment>
<comment type="interaction">
    <interactant intactId="EBI-346356">
        <id>O43516</id>
    </interactant>
    <interactant intactId="EBI-3905054">
        <id>P13196</id>
        <label>ALAS1</label>
    </interactant>
    <organismsDiffer>false</organismsDiffer>
    <experiments>3</experiments>
</comment>
<comment type="interaction">
    <interactant intactId="EBI-346356">
        <id>O43516</id>
    </interactant>
    <interactant intactId="EBI-1754067">
        <id>Q14296</id>
        <label>FASTK</label>
    </interactant>
    <organismsDiffer>false</organismsDiffer>
    <experiments>3</experiments>
</comment>
<comment type="interaction">
    <interactant intactId="EBI-346356">
        <id>O43516</id>
    </interactant>
    <interactant intactId="EBI-401755">
        <id>P62993</id>
        <label>GRB2</label>
    </interactant>
    <organismsDiffer>false</organismsDiffer>
    <experiments>5</experiments>
</comment>
<comment type="interaction">
    <interactant intactId="EBI-346356">
        <id>O43516</id>
    </interactant>
    <interactant intactId="EBI-346340">
        <id>P08631</id>
        <label>HCK</label>
    </interactant>
    <organismsDiffer>false</organismsDiffer>
    <experiments>3</experiments>
</comment>
<comment type="interaction">
    <interactant intactId="EBI-346356">
        <id>O43516</id>
    </interactant>
    <interactant intactId="EBI-750369">
        <id>P14317</id>
        <label>HCLS1</label>
    </interactant>
    <organismsDiffer>false</organismsDiffer>
    <experiments>2</experiments>
</comment>
<comment type="interaction">
    <interactant intactId="EBI-346356">
        <id>O43516</id>
    </interactant>
    <interactant intactId="EBI-748420">
        <id>Q9NSC5</id>
        <label>HOMER3</label>
    </interactant>
    <organismsDiffer>false</organismsDiffer>
    <experiments>3</experiments>
</comment>
<comment type="interaction">
    <interactant intactId="EBI-346356">
        <id>O43516</id>
    </interactant>
    <interactant intactId="EBI-373144">
        <id>Q9GZQ8</id>
        <label>MAP1LC3B</label>
    </interactant>
    <organismsDiffer>false</organismsDiffer>
    <experiments>4</experiments>
</comment>
<comment type="interaction">
    <interactant intactId="EBI-346356">
        <id>O43516</id>
    </interactant>
    <interactant intactId="EBI-389883">
        <id>P16333</id>
        <label>NCK1</label>
    </interactant>
    <organismsDiffer>false</organismsDiffer>
    <experiments>3</experiments>
</comment>
<comment type="interaction">
    <interactant intactId="EBI-346356">
        <id>O43516</id>
    </interactant>
    <interactant intactId="EBI-81134">
        <id>P53992</id>
        <label>SEC24C</label>
    </interactant>
    <organismsDiffer>false</organismsDiffer>
    <experiments>3</experiments>
</comment>
<comment type="interaction">
    <interactant intactId="EBI-346356">
        <id>O43516</id>
    </interactant>
    <interactant intactId="EBI-346375">
        <id>P42768</id>
        <label>WAS</label>
    </interactant>
    <organismsDiffer>false</organismsDiffer>
    <experiments>25</experiments>
</comment>
<comment type="interaction">
    <interactant intactId="EBI-346356">
        <id>O43516</id>
    </interactant>
    <interactant intactId="EBI-957615">
        <id>O00401</id>
        <label>WASL</label>
    </interactant>
    <organismsDiffer>false</organismsDiffer>
    <experiments>10</experiments>
</comment>
<comment type="interaction">
    <interactant intactId="EBI-346356">
        <id>O43516</id>
    </interactant>
    <interactant intactId="EBI-743923">
        <id>O00308</id>
        <label>WWP2</label>
    </interactant>
    <organismsDiffer>false</organismsDiffer>
    <experiments>4</experiments>
</comment>
<comment type="interaction">
    <interactant intactId="EBI-346356">
        <id>O43516</id>
    </interactant>
    <interactant intactId="EBI-397955">
        <id>Q60598</id>
        <label>Cttn</label>
    </interactant>
    <organismsDiffer>true</organismsDiffer>
    <experiments>4</experiments>
</comment>
<comment type="interaction">
    <interactant intactId="EBI-12052927">
        <id>O43516-4</id>
    </interactant>
    <interactant intactId="EBI-11096309">
        <id>Q9NYB9-2</id>
        <label>ABI2</label>
    </interactant>
    <organismsDiffer>false</organismsDiffer>
    <experiments>3</experiments>
</comment>
<comment type="interaction">
    <interactant intactId="EBI-12052927">
        <id>O43516-4</id>
    </interactant>
    <interactant intactId="EBI-6659211">
        <id>Q9Y698</id>
        <label>CACNG2</label>
    </interactant>
    <organismsDiffer>false</organismsDiffer>
    <experiments>3</experiments>
</comment>
<comment type="interaction">
    <interactant intactId="EBI-12052927">
        <id>O43516-4</id>
    </interactant>
    <interactant intactId="EBI-713635">
        <id>O43639</id>
        <label>NCK2</label>
    </interactant>
    <organismsDiffer>false</organismsDiffer>
    <experiments>3</experiments>
</comment>
<comment type="interaction">
    <interactant intactId="EBI-12052927">
        <id>O43516-4</id>
    </interactant>
    <interactant intactId="EBI-716910">
        <id>O15258</id>
        <label>RER1</label>
    </interactant>
    <organismsDiffer>false</organismsDiffer>
    <experiments>3</experiments>
</comment>
<comment type="interaction">
    <interactant intactId="EBI-12052927">
        <id>O43516-4</id>
    </interactant>
    <interactant intactId="EBI-346375">
        <id>P42768</id>
        <label>WAS</label>
    </interactant>
    <organismsDiffer>false</organismsDiffer>
    <experiments>3</experiments>
</comment>
<comment type="subcellular location">
    <subcellularLocation>
        <location evidence="1">Cytoplasmic vesicle</location>
    </subcellularLocation>
    <subcellularLocation>
        <location evidence="1">Cytoplasm</location>
        <location evidence="1">Cytoskeleton</location>
    </subcellularLocation>
    <subcellularLocation>
        <location evidence="11">Cell projection</location>
        <location evidence="11">Ruffle</location>
    </subcellularLocation>
    <text evidence="1">Vesicle surfaces and along actin tails. Colocalizes with actin stress fibers. When coexpressed with WASL, no longer associated with actin filaments but accumulated in perinuclear and cortical areas like WASL (By similarity).</text>
</comment>
<comment type="alternative products">
    <event type="alternative splicing"/>
    <isoform>
        <id>O43516-1</id>
        <name>1</name>
        <sequence type="displayed"/>
    </isoform>
    <isoform>
        <id>O43516-2</id>
        <name>2</name>
        <sequence type="described" ref="VSP_012965"/>
    </isoform>
    <isoform>
        <id>O43516-3</id>
        <name>3</name>
        <sequence type="described" ref="VSP_012966"/>
    </isoform>
    <isoform>
        <id>O43516-4</id>
        <name>4</name>
        <sequence type="described" ref="VSP_012964"/>
    </isoform>
</comment>
<comment type="tissue specificity">
    <text evidence="13">Highly expressed in peripheral blood mononuclear cells, spleen, placenta, small intestine, colon and thymus. Lower expression in ovary, heart, brain, lung, liver, skeletal muscle, kidney, pancreas, prostate and testis.</text>
</comment>
<comment type="domain">
    <text>Binds to WAS within the N-terminal region 170, at a site distinct from the CDC42-binding site.</text>
</comment>
<comment type="disease" evidence="12">
    <disease id="DI-03385">
        <name>Wiskott-Aldrich syndrome 2</name>
        <acronym>WAS2</acronym>
        <description>An immunodeficiency disorder characterized by eczema, thrombocytopenia, recurrent infections, defective T-cell proliferation, and impaired natural killer cell function.</description>
        <dbReference type="MIM" id="614493"/>
    </disease>
    <text>The disease is caused by variants affecting the gene represented in this entry.</text>
</comment>
<comment type="miscellaneous">
    <text evidence="1">Recruited to PIP5K-induced vesicle surfaces in the absence of functional WASL.</text>
</comment>
<comment type="similarity">
    <text evidence="19">Belongs to the verprolin family.</text>
</comment>
<comment type="sequence caution" evidence="19">
    <conflict type="frameshift">
        <sequence resource="EMBL-CDS" id="AAC03767"/>
    </conflict>
</comment>
<comment type="sequence caution" evidence="19">
    <conflict type="frameshift">
        <sequence resource="EMBL-CDS" id="CAA60014"/>
    </conflict>
</comment>
<sequence>MPVPPPPAPPPPPTFALANTEKPTLNKTEQAGRNALLSDISKGKKLKKTVTNDRSAPILDKPKGAGAGGGGGGFGGGGGFGGGGGGGGGGSFGGGGPPGLGGLFQAGMPKLRSTANRDNDSGGSRPPLLPPGGRSTSAKPFSPPSGPGRFPVPSPGHRSGPPEPQRNRMPPPRPDVGSKPDSIPPPVPSTPRPIQSSPHNRGSPPVPGGPRQPSPGPTPPPFPGNRGTALGGGSIRQSPLSSSSPFSNRPPLPPTPSRALDDKPPPPPPPVGNRPSIHREAVPPPPPQNNKPPVPSTPRPSASSQAPPPPPPPSRPGPPPLPPSSSGNDETPRLPQRNLSLSSSTPPLPSPGRSGPLPPPPSERPPPPVRDPPGRSGPLPPPPPVSRNGSTSRALPATPQLPSRSGVDSPRSGPRPPLPPDRPSAGAPPPPPPSTSIRNGFQDSPCEDEWESRFYFHPISDLPPPEPYVQTTKSYPSKLARNESRSGSNRRERGAPPLPPIPR</sequence>
<reference key="1">
    <citation type="journal article" date="1997" name="Proc. Natl. Acad. Sci. U.S.A.">
        <title>WIP, a protein associated with Wiskott-Aldrich syndrome protein, induces actin polymerization and redistribution in lymphoid cells.</title>
        <authorList>
            <person name="Ramesh N."/>
            <person name="Anton I.M."/>
            <person name="Hartwig J.H."/>
            <person name="Geha R.S."/>
        </authorList>
    </citation>
    <scope>NUCLEOTIDE SEQUENCE [MRNA] (ISOFORM 1)</scope>
    <scope>VARIANTS LEU-198 AND GLY-495</scope>
    <scope>FUNCTION</scope>
    <scope>TISSUE SPECIFICITY</scope>
    <scope>INTERACTION WITH WASP; PROFILIN AND ACTIN</scope>
</reference>
<reference key="2">
    <citation type="submission" date="1998-01" db="EMBL/GenBank/DDBJ databases">
        <authorList>
            <person name="Kreideweiss S."/>
            <person name="Delany-Heiken P."/>
            <person name="Nordheim A."/>
            <person name="Ruhlmann A."/>
        </authorList>
    </citation>
    <scope>NUCLEOTIDE SEQUENCE [MRNA] (ISOFORM 2)</scope>
    <scope>VARIANTS LEU-198 AND GLY-495</scope>
    <source>
        <tissue>Tonsil</tissue>
    </source>
</reference>
<reference key="3">
    <citation type="journal article" date="2007" name="BMC Genomics">
        <title>The full-ORF clone resource of the German cDNA consortium.</title>
        <authorList>
            <person name="Bechtel S."/>
            <person name="Rosenfelder H."/>
            <person name="Duda A."/>
            <person name="Schmidt C.P."/>
            <person name="Ernst U."/>
            <person name="Wellenreuther R."/>
            <person name="Mehrle A."/>
            <person name="Schuster C."/>
            <person name="Bahr A."/>
            <person name="Bloecker H."/>
            <person name="Heubner D."/>
            <person name="Hoerlein A."/>
            <person name="Michel G."/>
            <person name="Wedler H."/>
            <person name="Koehrer K."/>
            <person name="Ottenwaelder B."/>
            <person name="Poustka A."/>
            <person name="Wiemann S."/>
            <person name="Schupp I."/>
        </authorList>
    </citation>
    <scope>NUCLEOTIDE SEQUENCE [LARGE SCALE MRNA] (ISOFORM 3)</scope>
    <scope>VARIANT LEU-198</scope>
    <source>
        <tissue>Endometrial tumor</tissue>
    </source>
</reference>
<reference key="4">
    <citation type="journal article" date="2005" name="Nature">
        <title>Generation and annotation of the DNA sequences of human chromosomes 2 and 4.</title>
        <authorList>
            <person name="Hillier L.W."/>
            <person name="Graves T.A."/>
            <person name="Fulton R.S."/>
            <person name="Fulton L.A."/>
            <person name="Pepin K.H."/>
            <person name="Minx P."/>
            <person name="Wagner-McPherson C."/>
            <person name="Layman D."/>
            <person name="Wylie K."/>
            <person name="Sekhon M."/>
            <person name="Becker M.C."/>
            <person name="Fewell G.A."/>
            <person name="Delehaunty K.D."/>
            <person name="Miner T.L."/>
            <person name="Nash W.E."/>
            <person name="Kremitzki C."/>
            <person name="Oddy L."/>
            <person name="Du H."/>
            <person name="Sun H."/>
            <person name="Bradshaw-Cordum H."/>
            <person name="Ali J."/>
            <person name="Carter J."/>
            <person name="Cordes M."/>
            <person name="Harris A."/>
            <person name="Isak A."/>
            <person name="van Brunt A."/>
            <person name="Nguyen C."/>
            <person name="Du F."/>
            <person name="Courtney L."/>
            <person name="Kalicki J."/>
            <person name="Ozersky P."/>
            <person name="Abbott S."/>
            <person name="Armstrong J."/>
            <person name="Belter E.A."/>
            <person name="Caruso L."/>
            <person name="Cedroni M."/>
            <person name="Cotton M."/>
            <person name="Davidson T."/>
            <person name="Desai A."/>
            <person name="Elliott G."/>
            <person name="Erb T."/>
            <person name="Fronick C."/>
            <person name="Gaige T."/>
            <person name="Haakenson W."/>
            <person name="Haglund K."/>
            <person name="Holmes A."/>
            <person name="Harkins R."/>
            <person name="Kim K."/>
            <person name="Kruchowski S.S."/>
            <person name="Strong C.M."/>
            <person name="Grewal N."/>
            <person name="Goyea E."/>
            <person name="Hou S."/>
            <person name="Levy A."/>
            <person name="Martinka S."/>
            <person name="Mead K."/>
            <person name="McLellan M.D."/>
            <person name="Meyer R."/>
            <person name="Randall-Maher J."/>
            <person name="Tomlinson C."/>
            <person name="Dauphin-Kohlberg S."/>
            <person name="Kozlowicz-Reilly A."/>
            <person name="Shah N."/>
            <person name="Swearengen-Shahid S."/>
            <person name="Snider J."/>
            <person name="Strong J.T."/>
            <person name="Thompson J."/>
            <person name="Yoakum M."/>
            <person name="Leonard S."/>
            <person name="Pearman C."/>
            <person name="Trani L."/>
            <person name="Radionenko M."/>
            <person name="Waligorski J.E."/>
            <person name="Wang C."/>
            <person name="Rock S.M."/>
            <person name="Tin-Wollam A.-M."/>
            <person name="Maupin R."/>
            <person name="Latreille P."/>
            <person name="Wendl M.C."/>
            <person name="Yang S.-P."/>
            <person name="Pohl C."/>
            <person name="Wallis J.W."/>
            <person name="Spieth J."/>
            <person name="Bieri T.A."/>
            <person name="Berkowicz N."/>
            <person name="Nelson J.O."/>
            <person name="Osborne J."/>
            <person name="Ding L."/>
            <person name="Meyer R."/>
            <person name="Sabo A."/>
            <person name="Shotland Y."/>
            <person name="Sinha P."/>
            <person name="Wohldmann P.E."/>
            <person name="Cook L.L."/>
            <person name="Hickenbotham M.T."/>
            <person name="Eldred J."/>
            <person name="Williams D."/>
            <person name="Jones T.A."/>
            <person name="She X."/>
            <person name="Ciccarelli F.D."/>
            <person name="Izaurralde E."/>
            <person name="Taylor J."/>
            <person name="Schmutz J."/>
            <person name="Myers R.M."/>
            <person name="Cox D.R."/>
            <person name="Huang X."/>
            <person name="McPherson J.D."/>
            <person name="Mardis E.R."/>
            <person name="Clifton S.W."/>
            <person name="Warren W.C."/>
            <person name="Chinwalla A.T."/>
            <person name="Eddy S.R."/>
            <person name="Marra M.A."/>
            <person name="Ovcharenko I."/>
            <person name="Furey T.S."/>
            <person name="Miller W."/>
            <person name="Eichler E.E."/>
            <person name="Bork P."/>
            <person name="Suyama M."/>
            <person name="Torrents D."/>
            <person name="Waterston R.H."/>
            <person name="Wilson R.K."/>
        </authorList>
    </citation>
    <scope>NUCLEOTIDE SEQUENCE [LARGE SCALE GENOMIC DNA]</scope>
</reference>
<reference key="5">
    <citation type="submission" date="2005-09" db="EMBL/GenBank/DDBJ databases">
        <authorList>
            <person name="Mural R.J."/>
            <person name="Istrail S."/>
            <person name="Sutton G.G."/>
            <person name="Florea L."/>
            <person name="Halpern A.L."/>
            <person name="Mobarry C.M."/>
            <person name="Lippert R."/>
            <person name="Walenz B."/>
            <person name="Shatkay H."/>
            <person name="Dew I."/>
            <person name="Miller J.R."/>
            <person name="Flanigan M.J."/>
            <person name="Edwards N.J."/>
            <person name="Bolanos R."/>
            <person name="Fasulo D."/>
            <person name="Halldorsson B.V."/>
            <person name="Hannenhalli S."/>
            <person name="Turner R."/>
            <person name="Yooseph S."/>
            <person name="Lu F."/>
            <person name="Nusskern D.R."/>
            <person name="Shue B.C."/>
            <person name="Zheng X.H."/>
            <person name="Zhong F."/>
            <person name="Delcher A.L."/>
            <person name="Huson D.H."/>
            <person name="Kravitz S.A."/>
            <person name="Mouchard L."/>
            <person name="Reinert K."/>
            <person name="Remington K.A."/>
            <person name="Clark A.G."/>
            <person name="Waterman M.S."/>
            <person name="Eichler E.E."/>
            <person name="Adams M.D."/>
            <person name="Hunkapiller M.W."/>
            <person name="Myers E.W."/>
            <person name="Venter J.C."/>
        </authorList>
    </citation>
    <scope>NUCLEOTIDE SEQUENCE [LARGE SCALE GENOMIC DNA]</scope>
    <scope>VARIANT LEU-198</scope>
</reference>
<reference key="6">
    <citation type="journal article" date="2004" name="Genome Res.">
        <title>The status, quality, and expansion of the NIH full-length cDNA project: the Mammalian Gene Collection (MGC).</title>
        <authorList>
            <consortium name="The MGC Project Team"/>
        </authorList>
    </citation>
    <scope>NUCLEOTIDE SEQUENCE [LARGE SCALE MRNA] (ISOFORM 4)</scope>
    <scope>VARIANT LEU-198</scope>
    <source>
        <tissue>Skin</tissue>
    </source>
</reference>
<reference key="7">
    <citation type="journal article" date="1999" name="J. Immunol.">
        <title>Mutations that cause the Wiskott-Aldrich syndrome impair the interaction of Wiskott-Aldrich syndrome protein (WASP) with WASP interacting protein.</title>
        <authorList>
            <person name="Stewart D.M."/>
            <person name="Tian L."/>
            <person name="Nelson D.L."/>
        </authorList>
    </citation>
    <scope>NUCLEOTIDE SEQUENCE [MRNA] OF 192-503 (ISOFORM 1)</scope>
    <scope>INTERACTION WITH WASP</scope>
    <scope>VARIANT LEU-198</scope>
</reference>
<reference key="8">
    <citation type="journal article" date="2000" name="Nat. Cell Biol.">
        <title>A complex of N-WASP and WIP integrates signalling cascades that lead to actin polymerization.</title>
        <authorList>
            <person name="Moreau V."/>
            <person name="Frischknecht F."/>
            <person name="Reckmann I."/>
            <person name="Vincentelli R."/>
            <person name="Rabut G."/>
            <person name="Stewart D.M."/>
            <person name="Way M."/>
        </authorList>
    </citation>
    <scope>FUNCTION</scope>
</reference>
<reference key="9">
    <citation type="journal article" date="2008" name="J. Proteome Res.">
        <title>Phosphorylation analysis of primary human T lymphocytes using sequential IMAC and titanium oxide enrichment.</title>
        <authorList>
            <person name="Carrascal M."/>
            <person name="Ovelleiro D."/>
            <person name="Casas V."/>
            <person name="Gay M."/>
            <person name="Abian J."/>
        </authorList>
    </citation>
    <scope>IDENTIFICATION BY MASS SPECTROMETRY [LARGE SCALE ANALYSIS]</scope>
    <source>
        <tissue>T-cell</tissue>
    </source>
</reference>
<reference key="10">
    <citation type="journal article" date="2008" name="Proc. Natl. Acad. Sci. U.S.A.">
        <title>A quantitative atlas of mitotic phosphorylation.</title>
        <authorList>
            <person name="Dephoure N."/>
            <person name="Zhou C."/>
            <person name="Villen J."/>
            <person name="Beausoleil S.A."/>
            <person name="Bakalarski C.E."/>
            <person name="Elledge S.J."/>
            <person name="Gygi S.P."/>
        </authorList>
    </citation>
    <scope>PHOSPHORYLATION [LARGE SCALE ANALYSIS] AT THR-345 AND SER-350</scope>
    <scope>IDENTIFICATION BY MASS SPECTROMETRY [LARGE SCALE ANALYSIS]</scope>
    <source>
        <tissue>Cervix carcinoma</tissue>
    </source>
</reference>
<reference key="11">
    <citation type="journal article" date="2009" name="PLoS Genet.">
        <title>Requirements for F-BAR proteins TOCA-1 and TOCA-2 in actin dynamics and membrane trafficking during Caenorhabditis elegans oocyte growth and embryonic epidermal morphogenesis.</title>
        <authorList>
            <person name="Giuliani C."/>
            <person name="Troglio F."/>
            <person name="Bai Z."/>
            <person name="Patel F.B."/>
            <person name="Zucconi A."/>
            <person name="Malabarba M.G."/>
            <person name="Disanza A."/>
            <person name="Stradal T.B."/>
            <person name="Cassata G."/>
            <person name="Confalonieri S."/>
            <person name="Hardin J.D."/>
            <person name="Soto M.C."/>
            <person name="Grant B.D."/>
            <person name="Scita G."/>
        </authorList>
    </citation>
    <scope>INTERACTION WITH FNBP1L</scope>
</reference>
<reference key="12">
    <citation type="journal article" date="2009" name="Sci. Signal.">
        <title>Quantitative phosphoproteomic analysis of T cell receptor signaling reveals system-wide modulation of protein-protein interactions.</title>
        <authorList>
            <person name="Mayya V."/>
            <person name="Lundgren D.H."/>
            <person name="Hwang S.-I."/>
            <person name="Rezaul K."/>
            <person name="Wu L."/>
            <person name="Eng J.K."/>
            <person name="Rodionov V."/>
            <person name="Han D.K."/>
        </authorList>
    </citation>
    <scope>PHOSPHORYLATION [LARGE SCALE ANALYSIS] AT SER-350</scope>
    <scope>IDENTIFICATION BY MASS SPECTROMETRY [LARGE SCALE ANALYSIS]</scope>
    <source>
        <tissue>Leukemic T-cell</tissue>
    </source>
</reference>
<reference key="13">
    <citation type="journal article" date="2010" name="Mol. Biol. Cell">
        <title>Actin-binding protein-1 interacts with WASp-interacting protein to regulate growth factor-induced dorsal ruffle formation.</title>
        <authorList>
            <person name="Cortesio C.L."/>
            <person name="Perrin B.J."/>
            <person name="Bennin D.A."/>
            <person name="Huttenlocher A."/>
        </authorList>
    </citation>
    <scope>FUNCTION</scope>
    <scope>SUBCELLULAR LOCATION</scope>
    <scope>INTERACTION WITH DBNL</scope>
</reference>
<reference key="14">
    <citation type="journal article" date="2010" name="Sci. Signal.">
        <title>Quantitative phosphoproteomics reveals widespread full phosphorylation site occupancy during mitosis.</title>
        <authorList>
            <person name="Olsen J.V."/>
            <person name="Vermeulen M."/>
            <person name="Santamaria A."/>
            <person name="Kumar C."/>
            <person name="Miller M.L."/>
            <person name="Jensen L.J."/>
            <person name="Gnad F."/>
            <person name="Cox J."/>
            <person name="Jensen T.S."/>
            <person name="Nigg E.A."/>
            <person name="Brunak S."/>
            <person name="Mann M."/>
        </authorList>
    </citation>
    <scope>PHOSPHORYLATION [LARGE SCALE ANALYSIS] AT SER-340; THR-345 AND SER-350</scope>
    <scope>IDENTIFICATION BY MASS SPECTROMETRY [LARGE SCALE ANALYSIS]</scope>
    <source>
        <tissue>Cervix carcinoma</tissue>
    </source>
</reference>
<reference key="15">
    <citation type="journal article" date="2011" name="BMC Syst. Biol.">
        <title>Initial characterization of the human central proteome.</title>
        <authorList>
            <person name="Burkard T.R."/>
            <person name="Planyavsky M."/>
            <person name="Kaupe I."/>
            <person name="Breitwieser F.P."/>
            <person name="Buerckstuemmer T."/>
            <person name="Bennett K.L."/>
            <person name="Superti-Furga G."/>
            <person name="Colinge J."/>
        </authorList>
    </citation>
    <scope>IDENTIFICATION BY MASS SPECTROMETRY [LARGE SCALE ANALYSIS]</scope>
</reference>
<reference key="16">
    <citation type="journal article" date="2012" name="J. Exp. Med.">
        <title>A novel primary human immunodeficiency due to deficiency in the WASP-interacting protein WIP.</title>
        <authorList>
            <person name="Lanzi G."/>
            <person name="Moratto D."/>
            <person name="Vairo D."/>
            <person name="Masneri S."/>
            <person name="Delmonte O."/>
            <person name="Paganini T."/>
            <person name="Parolini S."/>
            <person name="Tabellini G."/>
            <person name="Mazza C."/>
            <person name="Savoldi G."/>
            <person name="Montin D."/>
            <person name="Martino S."/>
            <person name="Tovo P."/>
            <person name="Pessach I.M."/>
            <person name="Massaad M.J."/>
            <person name="Ramesh N."/>
            <person name="Porta F."/>
            <person name="Plebani A."/>
            <person name="Notarangelo L.D."/>
            <person name="Geha R.S."/>
            <person name="Giliani S."/>
        </authorList>
    </citation>
    <scope>INVOLVEMENT IN WAS2</scope>
</reference>
<reference key="17">
    <citation type="journal article" date="2013" name="J. Proteome Res.">
        <title>Toward a comprehensive characterization of a human cancer cell phosphoproteome.</title>
        <authorList>
            <person name="Zhou H."/>
            <person name="Di Palma S."/>
            <person name="Preisinger C."/>
            <person name="Peng M."/>
            <person name="Polat A.N."/>
            <person name="Heck A.J."/>
            <person name="Mohammed S."/>
        </authorList>
    </citation>
    <scope>PHOSPHORYLATION [LARGE SCALE ANALYSIS] AT SER-234; SER-340 AND SER-350</scope>
    <scope>IDENTIFICATION BY MASS SPECTROMETRY [LARGE SCALE ANALYSIS]</scope>
    <source>
        <tissue>Erythroleukemia</tissue>
    </source>
</reference>
<reference key="18">
    <citation type="journal article" date="2014" name="J. Proteomics">
        <title>An enzyme assisted RP-RPLC approach for in-depth analysis of human liver phosphoproteome.</title>
        <authorList>
            <person name="Bian Y."/>
            <person name="Song C."/>
            <person name="Cheng K."/>
            <person name="Dong M."/>
            <person name="Wang F."/>
            <person name="Huang J."/>
            <person name="Sun D."/>
            <person name="Wang L."/>
            <person name="Ye M."/>
            <person name="Zou H."/>
        </authorList>
    </citation>
    <scope>PHOSPHORYLATION [LARGE SCALE ANALYSIS] AT SER-340</scope>
    <scope>IDENTIFICATION BY MASS SPECTROMETRY [LARGE SCALE ANALYSIS]</scope>
    <source>
        <tissue>Liver</tissue>
    </source>
</reference>
<reference key="19">
    <citation type="journal article" date="2015" name="Proteomics">
        <title>N-terminome analysis of the human mitochondrial proteome.</title>
        <authorList>
            <person name="Vaca Jacome A.S."/>
            <person name="Rabilloud T."/>
            <person name="Schaeffer-Reiss C."/>
            <person name="Rompais M."/>
            <person name="Ayoub D."/>
            <person name="Lane L."/>
            <person name="Bairoch A."/>
            <person name="Van Dorsselaer A."/>
            <person name="Carapito C."/>
        </authorList>
    </citation>
    <scope>IDENTIFICATION BY MASS SPECTROMETRY [LARGE SCALE ANALYSIS]</scope>
</reference>
<reference key="20">
    <citation type="journal article" date="2005" name="Proc. Natl. Acad. Sci. U.S.A.">
        <title>Actin-bound structures of Wiskott-Aldrich syndrome protein (WASP)-homology domain 2 and the implications for filament assembly.</title>
        <authorList>
            <person name="Chereau D."/>
            <person name="Kerff F."/>
            <person name="Graceffa P."/>
            <person name="Grabarek Z."/>
            <person name="Langsetmo K."/>
            <person name="Dominguez R."/>
        </authorList>
    </citation>
    <scope>X-RAY CRYSTALLOGRAPHY (2.6 ANGSTROMS) OF 29-60 IN COMPLEX WITH ACTIN</scope>
</reference>
<proteinExistence type="evidence at protein level"/>
<dbReference type="EMBL" id="AF031588">
    <property type="protein sequence ID" value="AAC03767.1"/>
    <property type="status" value="ALT_FRAME"/>
    <property type="molecule type" value="mRNA"/>
</dbReference>
<dbReference type="EMBL" id="X86019">
    <property type="protein sequence ID" value="CAA60014.1"/>
    <property type="status" value="ALT_FRAME"/>
    <property type="molecule type" value="mRNA"/>
</dbReference>
<dbReference type="EMBL" id="BX640870">
    <property type="protein sequence ID" value="CAE45928.1"/>
    <property type="molecule type" value="mRNA"/>
</dbReference>
<dbReference type="EMBL" id="AC010894">
    <property type="protein sequence ID" value="AAY14708.1"/>
    <property type="molecule type" value="Genomic_DNA"/>
</dbReference>
<dbReference type="EMBL" id="AC104595">
    <property type="status" value="NOT_ANNOTATED_CDS"/>
    <property type="molecule type" value="Genomic_DNA"/>
</dbReference>
<dbReference type="EMBL" id="CH471058">
    <property type="protein sequence ID" value="EAX11131.1"/>
    <property type="molecule type" value="Genomic_DNA"/>
</dbReference>
<dbReference type="EMBL" id="CH471058">
    <property type="protein sequence ID" value="EAX11132.1"/>
    <property type="molecule type" value="Genomic_DNA"/>
</dbReference>
<dbReference type="EMBL" id="CH471058">
    <property type="protein sequence ID" value="EAX11133.1"/>
    <property type="molecule type" value="Genomic_DNA"/>
</dbReference>
<dbReference type="EMBL" id="BC002914">
    <property type="protein sequence ID" value="AAH02914.1"/>
    <property type="molecule type" value="mRNA"/>
</dbReference>
<dbReference type="EMBL" id="AF106062">
    <property type="protein sequence ID" value="AAD45972.1"/>
    <property type="molecule type" value="mRNA"/>
</dbReference>
<dbReference type="CCDS" id="CCDS2260.1">
    <molecule id="O43516-1"/>
</dbReference>
<dbReference type="CCDS" id="CCDS92901.1">
    <molecule id="O43516-3"/>
</dbReference>
<dbReference type="RefSeq" id="NP_001070737.1">
    <molecule id="O43516-1"/>
    <property type="nucleotide sequence ID" value="NM_001077269.1"/>
</dbReference>
<dbReference type="RefSeq" id="NP_001362761.1">
    <molecule id="O43516-1"/>
    <property type="nucleotide sequence ID" value="NM_001375832.1"/>
</dbReference>
<dbReference type="RefSeq" id="NP_001362762.1">
    <molecule id="O43516-1"/>
    <property type="nucleotide sequence ID" value="NM_001375833.1"/>
</dbReference>
<dbReference type="RefSeq" id="NP_001362763.1">
    <molecule id="O43516-1"/>
    <property type="nucleotide sequence ID" value="NM_001375834.1"/>
</dbReference>
<dbReference type="RefSeq" id="NP_001362764.1">
    <molecule id="O43516-3"/>
    <property type="nucleotide sequence ID" value="NM_001375835.1"/>
</dbReference>
<dbReference type="RefSeq" id="NP_003378.3">
    <molecule id="O43516-1"/>
    <property type="nucleotide sequence ID" value="NM_003387.4"/>
</dbReference>
<dbReference type="RefSeq" id="XP_011510082.1">
    <property type="nucleotide sequence ID" value="XM_011511780.2"/>
</dbReference>
<dbReference type="RefSeq" id="XP_047301705.1">
    <molecule id="O43516-1"/>
    <property type="nucleotide sequence ID" value="XM_047445749.1"/>
</dbReference>
<dbReference type="RefSeq" id="XP_047301706.1">
    <molecule id="O43516-1"/>
    <property type="nucleotide sequence ID" value="XM_047445750.1"/>
</dbReference>
<dbReference type="RefSeq" id="XP_047301707.1">
    <molecule id="O43516-1"/>
    <property type="nucleotide sequence ID" value="XM_047445751.1"/>
</dbReference>
<dbReference type="RefSeq" id="XP_047301708.1">
    <molecule id="O43516-1"/>
    <property type="nucleotide sequence ID" value="XM_047445752.1"/>
</dbReference>
<dbReference type="RefSeq" id="XP_047301709.1">
    <molecule id="O43516-1"/>
    <property type="nucleotide sequence ID" value="XM_047445753.1"/>
</dbReference>
<dbReference type="RefSeq" id="XP_047301710.1">
    <molecule id="O43516-1"/>
    <property type="nucleotide sequence ID" value="XM_047445754.1"/>
</dbReference>
<dbReference type="RefSeq" id="XP_047301711.1">
    <molecule id="O43516-1"/>
    <property type="nucleotide sequence ID" value="XM_047445755.1"/>
</dbReference>
<dbReference type="RefSeq" id="XP_047301712.1">
    <molecule id="O43516-1"/>
    <property type="nucleotide sequence ID" value="XM_047445756.1"/>
</dbReference>
<dbReference type="RefSeq" id="XP_047301713.1">
    <molecule id="O43516-1"/>
    <property type="nucleotide sequence ID" value="XM_047445757.1"/>
</dbReference>
<dbReference type="PDB" id="2A41">
    <property type="method" value="X-ray"/>
    <property type="resolution" value="2.60 A"/>
    <property type="chains" value="C=29-60"/>
</dbReference>
<dbReference type="PDB" id="9EZN">
    <property type="method" value="NMR"/>
    <property type="chains" value="B=165-183"/>
</dbReference>
<dbReference type="PDB" id="9EZO">
    <property type="method" value="NMR"/>
    <property type="chains" value="B=165-183"/>
</dbReference>
<dbReference type="PDB" id="9EZP">
    <property type="method" value="NMR"/>
    <property type="chains" value="B=165-183"/>
</dbReference>
<dbReference type="PDBsum" id="2A41"/>
<dbReference type="PDBsum" id="9EZN"/>
<dbReference type="PDBsum" id="9EZO"/>
<dbReference type="PDBsum" id="9EZP"/>
<dbReference type="SMR" id="O43516"/>
<dbReference type="BioGRID" id="113295">
    <property type="interactions" value="42"/>
</dbReference>
<dbReference type="CORUM" id="O43516"/>
<dbReference type="DIP" id="DIP-17015N"/>
<dbReference type="ELM" id="O43516"/>
<dbReference type="FunCoup" id="O43516">
    <property type="interactions" value="652"/>
</dbReference>
<dbReference type="IntAct" id="O43516">
    <property type="interactions" value="28"/>
</dbReference>
<dbReference type="MINT" id="O43516"/>
<dbReference type="STRING" id="9606.ENSP00000376330"/>
<dbReference type="GlyCosmos" id="O43516">
    <property type="glycosylation" value="1 site, 1 glycan"/>
</dbReference>
<dbReference type="GlyGen" id="O43516">
    <property type="glycosylation" value="5 sites, 1 N-linked glycan (1 site), 1 O-linked glycan (2 sites)"/>
</dbReference>
<dbReference type="iPTMnet" id="O43516"/>
<dbReference type="PhosphoSitePlus" id="O43516"/>
<dbReference type="BioMuta" id="WIPF1"/>
<dbReference type="jPOST" id="O43516"/>
<dbReference type="MassIVE" id="O43516"/>
<dbReference type="PaxDb" id="9606-ENSP00000376330"/>
<dbReference type="PeptideAtlas" id="O43516"/>
<dbReference type="ProteomicsDB" id="49004">
    <molecule id="O43516-1"/>
</dbReference>
<dbReference type="ProteomicsDB" id="49005">
    <molecule id="O43516-2"/>
</dbReference>
<dbReference type="ProteomicsDB" id="49006">
    <molecule id="O43516-3"/>
</dbReference>
<dbReference type="ProteomicsDB" id="49007">
    <molecule id="O43516-4"/>
</dbReference>
<dbReference type="Pumba" id="O43516"/>
<dbReference type="Antibodypedia" id="4053">
    <property type="antibodies" value="161 antibodies from 33 providers"/>
</dbReference>
<dbReference type="DNASU" id="7456"/>
<dbReference type="Ensembl" id="ENST00000272746.9">
    <molecule id="O43516-3"/>
    <property type="protein sequence ID" value="ENSP00000272746.5"/>
    <property type="gene ID" value="ENSG00000115935.19"/>
</dbReference>
<dbReference type="Ensembl" id="ENST00000359761.7">
    <molecule id="O43516-1"/>
    <property type="protein sequence ID" value="ENSP00000352802.3"/>
    <property type="gene ID" value="ENSG00000115935.19"/>
</dbReference>
<dbReference type="Ensembl" id="ENST00000392546.6">
    <molecule id="O43516-1"/>
    <property type="protein sequence ID" value="ENSP00000376329.2"/>
    <property type="gene ID" value="ENSG00000115935.19"/>
</dbReference>
<dbReference type="Ensembl" id="ENST00000392547.6">
    <molecule id="O43516-1"/>
    <property type="protein sequence ID" value="ENSP00000376330.2"/>
    <property type="gene ID" value="ENSG00000115935.19"/>
</dbReference>
<dbReference type="Ensembl" id="ENST00000409891.5">
    <molecule id="O43516-2"/>
    <property type="protein sequence ID" value="ENSP00000386431.1"/>
    <property type="gene ID" value="ENSG00000115935.19"/>
</dbReference>
<dbReference type="Ensembl" id="ENST00000436221.2">
    <molecule id="O43516-1"/>
    <property type="protein sequence ID" value="ENSP00000388454.2"/>
    <property type="gene ID" value="ENSG00000115935.19"/>
</dbReference>
<dbReference type="Ensembl" id="ENST00000679041.1">
    <molecule id="O43516-1"/>
    <property type="protein sequence ID" value="ENSP00000503603.1"/>
    <property type="gene ID" value="ENSG00000115935.19"/>
</dbReference>
<dbReference type="Ensembl" id="ENST00000698668.1">
    <molecule id="O43516-1"/>
    <property type="protein sequence ID" value="ENSP00000513869.1"/>
    <property type="gene ID" value="ENSG00000115935.19"/>
</dbReference>
<dbReference type="Ensembl" id="ENST00000698701.1">
    <molecule id="O43516-1"/>
    <property type="protein sequence ID" value="ENSP00000513882.1"/>
    <property type="gene ID" value="ENSG00000115935.19"/>
</dbReference>
<dbReference type="GeneID" id="7456"/>
<dbReference type="KEGG" id="hsa:7456"/>
<dbReference type="MANE-Select" id="ENST00000679041.1">
    <property type="protein sequence ID" value="ENSP00000503603.1"/>
    <property type="RefSeq nucleotide sequence ID" value="NM_001375834.1"/>
    <property type="RefSeq protein sequence ID" value="NP_001362763.1"/>
</dbReference>
<dbReference type="UCSC" id="uc002uiz.4">
    <molecule id="O43516-1"/>
    <property type="organism name" value="human"/>
</dbReference>
<dbReference type="AGR" id="HGNC:12736"/>
<dbReference type="CTD" id="7456"/>
<dbReference type="DisGeNET" id="7456"/>
<dbReference type="GeneCards" id="WIPF1"/>
<dbReference type="HGNC" id="HGNC:12736">
    <property type="gene designation" value="WIPF1"/>
</dbReference>
<dbReference type="HPA" id="ENSG00000115935">
    <property type="expression patterns" value="Tissue enhanced (lymphoid)"/>
</dbReference>
<dbReference type="MalaCards" id="WIPF1"/>
<dbReference type="MIM" id="602357">
    <property type="type" value="gene"/>
</dbReference>
<dbReference type="MIM" id="614493">
    <property type="type" value="phenotype"/>
</dbReference>
<dbReference type="neXtProt" id="NX_O43516"/>
<dbReference type="OpenTargets" id="ENSG00000115935"/>
<dbReference type="Orphanet" id="906">
    <property type="disease" value="Wiskott-Aldrich syndrome"/>
</dbReference>
<dbReference type="PharmGKB" id="PA162409189"/>
<dbReference type="VEuPathDB" id="HostDB:ENSG00000115935"/>
<dbReference type="eggNOG" id="KOG4462">
    <property type="taxonomic scope" value="Eukaryota"/>
</dbReference>
<dbReference type="GeneTree" id="ENSGT00910000144296"/>
<dbReference type="HOGENOM" id="CLU_041032_0_0_1"/>
<dbReference type="InParanoid" id="O43516"/>
<dbReference type="OMA" id="NAFGHSQ"/>
<dbReference type="OrthoDB" id="6157464at2759"/>
<dbReference type="PAN-GO" id="O43516">
    <property type="GO annotations" value="2 GO annotations based on evolutionary models"/>
</dbReference>
<dbReference type="PhylomeDB" id="O43516"/>
<dbReference type="TreeFam" id="TF332135"/>
<dbReference type="PathwayCommons" id="O43516"/>
<dbReference type="Reactome" id="R-HSA-2029482">
    <property type="pathway name" value="Regulation of actin dynamics for phagocytic cup formation"/>
</dbReference>
<dbReference type="Reactome" id="R-HSA-5663213">
    <property type="pathway name" value="RHO GTPases Activate WASPs and WAVEs"/>
</dbReference>
<dbReference type="Reactome" id="R-HSA-9013148">
    <property type="pathway name" value="CDC42 GTPase cycle"/>
</dbReference>
<dbReference type="Reactome" id="R-HSA-9013149">
    <property type="pathway name" value="RAC1 GTPase cycle"/>
</dbReference>
<dbReference type="Reactome" id="R-HSA-9664422">
    <property type="pathway name" value="FCGR3A-mediated phagocytosis"/>
</dbReference>
<dbReference type="SignaLink" id="O43516"/>
<dbReference type="SIGNOR" id="O43516"/>
<dbReference type="BioGRID-ORCS" id="7456">
    <property type="hits" value="28 hits in 1156 CRISPR screens"/>
</dbReference>
<dbReference type="ChiTaRS" id="WIPF1">
    <property type="organism name" value="human"/>
</dbReference>
<dbReference type="EvolutionaryTrace" id="O43516"/>
<dbReference type="GeneWiki" id="WIPF1"/>
<dbReference type="GenomeRNAi" id="7456"/>
<dbReference type="Pharos" id="O43516">
    <property type="development level" value="Tbio"/>
</dbReference>
<dbReference type="PRO" id="PR:O43516"/>
<dbReference type="Proteomes" id="UP000005640">
    <property type="component" value="Chromosome 2"/>
</dbReference>
<dbReference type="RNAct" id="O43516">
    <property type="molecule type" value="protein"/>
</dbReference>
<dbReference type="Bgee" id="ENSG00000115935">
    <property type="expression patterns" value="Expressed in blood and 202 other cell types or tissues"/>
</dbReference>
<dbReference type="ExpressionAtlas" id="O43516">
    <property type="expression patterns" value="baseline and differential"/>
</dbReference>
<dbReference type="GO" id="GO:0015629">
    <property type="term" value="C:actin cytoskeleton"/>
    <property type="evidence" value="ECO:0000304"/>
    <property type="project" value="ProtInc"/>
</dbReference>
<dbReference type="GO" id="GO:0005884">
    <property type="term" value="C:actin filament"/>
    <property type="evidence" value="ECO:0000318"/>
    <property type="project" value="GO_Central"/>
</dbReference>
<dbReference type="GO" id="GO:0031410">
    <property type="term" value="C:cytoplasmic vesicle"/>
    <property type="evidence" value="ECO:0007669"/>
    <property type="project" value="UniProtKB-KW"/>
</dbReference>
<dbReference type="GO" id="GO:0005829">
    <property type="term" value="C:cytosol"/>
    <property type="evidence" value="ECO:0000304"/>
    <property type="project" value="Reactome"/>
</dbReference>
<dbReference type="GO" id="GO:0001726">
    <property type="term" value="C:ruffle"/>
    <property type="evidence" value="ECO:0007669"/>
    <property type="project" value="UniProtKB-SubCell"/>
</dbReference>
<dbReference type="GO" id="GO:0003779">
    <property type="term" value="F:actin binding"/>
    <property type="evidence" value="ECO:0000304"/>
    <property type="project" value="ProtInc"/>
</dbReference>
<dbReference type="GO" id="GO:0008093">
    <property type="term" value="F:cytoskeletal anchor activity"/>
    <property type="evidence" value="ECO:0000314"/>
    <property type="project" value="GO_Central"/>
</dbReference>
<dbReference type="GO" id="GO:0005522">
    <property type="term" value="F:profilin binding"/>
    <property type="evidence" value="ECO:0000304"/>
    <property type="project" value="ProtInc"/>
</dbReference>
<dbReference type="GO" id="GO:0044183">
    <property type="term" value="F:protein folding chaperone"/>
    <property type="evidence" value="ECO:0000269"/>
    <property type="project" value="DisProt"/>
</dbReference>
<dbReference type="GO" id="GO:0017124">
    <property type="term" value="F:SH3 domain binding"/>
    <property type="evidence" value="ECO:0000353"/>
    <property type="project" value="UniProtKB"/>
</dbReference>
<dbReference type="GO" id="GO:0030048">
    <property type="term" value="P:actin filament-based movement"/>
    <property type="evidence" value="ECO:0000318"/>
    <property type="project" value="GO_Central"/>
</dbReference>
<dbReference type="GO" id="GO:0008154">
    <property type="term" value="P:actin polymerization or depolymerization"/>
    <property type="evidence" value="ECO:0000304"/>
    <property type="project" value="ProtInc"/>
</dbReference>
<dbReference type="GO" id="GO:0065003">
    <property type="term" value="P:protein-containing complex assembly"/>
    <property type="evidence" value="ECO:0000304"/>
    <property type="project" value="ProtInc"/>
</dbReference>
<dbReference type="GO" id="GO:0051707">
    <property type="term" value="P:response to other organism"/>
    <property type="evidence" value="ECO:0007669"/>
    <property type="project" value="Ensembl"/>
</dbReference>
<dbReference type="CDD" id="cd22076">
    <property type="entry name" value="WH2_WAS_WASL-1"/>
    <property type="match status" value="1"/>
</dbReference>
<dbReference type="DisProt" id="DP01172"/>
<dbReference type="FunFam" id="2.30.29.30:FF:000294">
    <property type="entry name" value="WAS/WASL-interacting protein family member 1"/>
    <property type="match status" value="1"/>
</dbReference>
<dbReference type="Gene3D" id="2.30.29.30">
    <property type="entry name" value="Pleckstrin-homology domain (PH domain)/Phosphotyrosine-binding domain (PTB)"/>
    <property type="match status" value="1"/>
</dbReference>
<dbReference type="IDEAL" id="IID00258"/>
<dbReference type="InterPro" id="IPR011993">
    <property type="entry name" value="PH-like_dom_sf"/>
</dbReference>
<dbReference type="InterPro" id="IPR053099">
    <property type="entry name" value="WAS/WASL-interacting_domain"/>
</dbReference>
<dbReference type="InterPro" id="IPR003124">
    <property type="entry name" value="WH2_dom"/>
</dbReference>
<dbReference type="PANTHER" id="PTHR48226">
    <property type="entry name" value="OS06G0326200 PROTEIN"/>
    <property type="match status" value="1"/>
</dbReference>
<dbReference type="PANTHER" id="PTHR48226:SF1">
    <property type="entry name" value="WAS_WASL-INTERACTING PROTEIN FAMILY MEMBER 1"/>
    <property type="match status" value="1"/>
</dbReference>
<dbReference type="Pfam" id="PF02205">
    <property type="entry name" value="WH2"/>
    <property type="match status" value="1"/>
</dbReference>
<dbReference type="SMART" id="SM00246">
    <property type="entry name" value="WH2"/>
    <property type="match status" value="1"/>
</dbReference>
<dbReference type="PROSITE" id="PS51082">
    <property type="entry name" value="WH2"/>
    <property type="match status" value="1"/>
</dbReference>
<evidence type="ECO:0000250" key="1"/>
<evidence type="ECO:0000250" key="2">
    <source>
        <dbReference type="UniProtKB" id="Q8K1I7"/>
    </source>
</evidence>
<evidence type="ECO:0000255" key="3">
    <source>
        <dbReference type="PROSITE-ProRule" id="PRU00406"/>
    </source>
</evidence>
<evidence type="ECO:0000256" key="4">
    <source>
        <dbReference type="SAM" id="MobiDB-lite"/>
    </source>
</evidence>
<evidence type="ECO:0000269" key="5">
    <source>
    </source>
</evidence>
<evidence type="ECO:0000269" key="6">
    <source>
    </source>
</evidence>
<evidence type="ECO:0000269" key="7">
    <source>
    </source>
</evidence>
<evidence type="ECO:0000269" key="8">
    <source>
    </source>
</evidence>
<evidence type="ECO:0000269" key="9">
    <source>
    </source>
</evidence>
<evidence type="ECO:0000269" key="10">
    <source>
    </source>
</evidence>
<evidence type="ECO:0000269" key="11">
    <source>
    </source>
</evidence>
<evidence type="ECO:0000269" key="12">
    <source>
    </source>
</evidence>
<evidence type="ECO:0000269" key="13">
    <source>
    </source>
</evidence>
<evidence type="ECO:0000269" key="14">
    <source ref="2"/>
</evidence>
<evidence type="ECO:0000269" key="15">
    <source ref="5"/>
</evidence>
<evidence type="ECO:0000303" key="16">
    <source>
    </source>
</evidence>
<evidence type="ECO:0000303" key="17">
    <source>
    </source>
</evidence>
<evidence type="ECO:0000303" key="18">
    <source ref="2"/>
</evidence>
<evidence type="ECO:0000305" key="19"/>
<evidence type="ECO:0007744" key="20">
    <source>
    </source>
</evidence>
<evidence type="ECO:0007744" key="21">
    <source>
    </source>
</evidence>
<evidence type="ECO:0007744" key="22">
    <source>
    </source>
</evidence>
<evidence type="ECO:0007744" key="23">
    <source>
    </source>
</evidence>
<evidence type="ECO:0007744" key="24">
    <source>
    </source>
</evidence>
<evidence type="ECO:0007829" key="25">
    <source>
        <dbReference type="PDB" id="2A41"/>
    </source>
</evidence>